<protein>
    <recommendedName>
        <fullName evidence="2">Superoxide dismutase [Cu-Zn]</fullName>
        <ecNumber evidence="2">1.15.1.1</ecNumber>
    </recommendedName>
</protein>
<name>SODC_HYLLA</name>
<reference key="1">
    <citation type="journal article" date="2002" name="Gene">
        <title>Structure, molecular evolution, and gene expression of primate superoxide dismutases.</title>
        <authorList>
            <person name="Fukuhara R."/>
            <person name="Tezuka T."/>
            <person name="Kageyama T."/>
        </authorList>
    </citation>
    <scope>NUCLEOTIDE SEQUENCE [MRNA]</scope>
</reference>
<accession>Q8HXQ3</accession>
<evidence type="ECO:0000250" key="1"/>
<evidence type="ECO:0000250" key="2">
    <source>
        <dbReference type="UniProtKB" id="P00441"/>
    </source>
</evidence>
<evidence type="ECO:0000250" key="3">
    <source>
        <dbReference type="UniProtKB" id="P00442"/>
    </source>
</evidence>
<evidence type="ECO:0000250" key="4">
    <source>
        <dbReference type="UniProtKB" id="P07632"/>
    </source>
</evidence>
<evidence type="ECO:0000250" key="5">
    <source>
        <dbReference type="UniProtKB" id="P08228"/>
    </source>
</evidence>
<evidence type="ECO:0000305" key="6"/>
<comment type="function">
    <text>Destroys radicals which are normally produced within the cells and which are toxic to biological systems.</text>
</comment>
<comment type="catalytic activity">
    <reaction>
        <text>2 superoxide + 2 H(+) = H2O2 + O2</text>
        <dbReference type="Rhea" id="RHEA:20696"/>
        <dbReference type="ChEBI" id="CHEBI:15378"/>
        <dbReference type="ChEBI" id="CHEBI:15379"/>
        <dbReference type="ChEBI" id="CHEBI:16240"/>
        <dbReference type="ChEBI" id="CHEBI:18421"/>
        <dbReference type="EC" id="1.15.1.1"/>
    </reaction>
</comment>
<comment type="cofactor">
    <cofactor evidence="1">
        <name>Cu cation</name>
        <dbReference type="ChEBI" id="CHEBI:23378"/>
    </cofactor>
    <text evidence="1">Binds 1 copper ion per subunit.</text>
</comment>
<comment type="cofactor">
    <cofactor evidence="1">
        <name>Zn(2+)</name>
        <dbReference type="ChEBI" id="CHEBI:29105"/>
    </cofactor>
    <text evidence="1">Binds 1 zinc ion per subunit.</text>
</comment>
<comment type="subunit">
    <text evidence="2 5">Homodimer; non-disulfide-linked (By similarity). Heterodimer with SOD1. The heterodimer CCS:SOD1 interacts with SLC31A1; this heterotrimer is Cu(1+)-mediated and its maintenance is regulated through SOD1 activation (By similarity).</text>
</comment>
<comment type="subcellular location">
    <subcellularLocation>
        <location evidence="1">Cytoplasm</location>
    </subcellularLocation>
    <subcellularLocation>
        <location evidence="1">Nucleus</location>
    </subcellularLocation>
</comment>
<comment type="PTM">
    <text evidence="1">Palmitoylation helps nuclear targeting and decreases catalytic activity.</text>
</comment>
<comment type="PTM">
    <text evidence="2">Succinylation, adjacent to copper catalytic site, probably inhibits activity. Desuccinylation by SIRT5 enhances activity.</text>
</comment>
<comment type="similarity">
    <text evidence="6">Belongs to the Cu-Zn superoxide dismutase family.</text>
</comment>
<feature type="initiator methionine" description="Removed" evidence="3">
    <location>
        <position position="1"/>
    </location>
</feature>
<feature type="chain" id="PRO_0000164058" description="Superoxide dismutase [Cu-Zn]">
    <location>
        <begin position="2"/>
        <end position="154"/>
    </location>
</feature>
<feature type="binding site" evidence="1">
    <location>
        <position position="47"/>
    </location>
    <ligand>
        <name>Cu cation</name>
        <dbReference type="ChEBI" id="CHEBI:23378"/>
        <note>catalytic</note>
    </ligand>
</feature>
<feature type="binding site" evidence="1">
    <location>
        <position position="49"/>
    </location>
    <ligand>
        <name>Cu cation</name>
        <dbReference type="ChEBI" id="CHEBI:23378"/>
        <note>catalytic</note>
    </ligand>
</feature>
<feature type="binding site" evidence="1">
    <location>
        <position position="64"/>
    </location>
    <ligand>
        <name>Cu cation</name>
        <dbReference type="ChEBI" id="CHEBI:23378"/>
        <note>catalytic</note>
    </ligand>
</feature>
<feature type="binding site" evidence="1">
    <location>
        <position position="64"/>
    </location>
    <ligand>
        <name>Zn(2+)</name>
        <dbReference type="ChEBI" id="CHEBI:29105"/>
        <note>structural</note>
    </ligand>
</feature>
<feature type="binding site" evidence="1">
    <location>
        <position position="72"/>
    </location>
    <ligand>
        <name>Zn(2+)</name>
        <dbReference type="ChEBI" id="CHEBI:29105"/>
        <note>structural</note>
    </ligand>
</feature>
<feature type="binding site" evidence="1">
    <location>
        <position position="81"/>
    </location>
    <ligand>
        <name>Zn(2+)</name>
        <dbReference type="ChEBI" id="CHEBI:29105"/>
        <note>structural</note>
    </ligand>
</feature>
<feature type="binding site" evidence="1">
    <location>
        <position position="84"/>
    </location>
    <ligand>
        <name>Zn(2+)</name>
        <dbReference type="ChEBI" id="CHEBI:29105"/>
        <note>structural</note>
    </ligand>
</feature>
<feature type="binding site" evidence="1">
    <location>
        <position position="121"/>
    </location>
    <ligand>
        <name>Cu cation</name>
        <dbReference type="ChEBI" id="CHEBI:23378"/>
        <note>catalytic</note>
    </ligand>
</feature>
<feature type="modified residue" description="N-acetylalanine" evidence="3">
    <location>
        <position position="2"/>
    </location>
</feature>
<feature type="modified residue" description="N6-succinyllysine" evidence="5">
    <location>
        <position position="4"/>
    </location>
</feature>
<feature type="modified residue" description="N6-succinyllysine" evidence="5">
    <location>
        <position position="10"/>
    </location>
</feature>
<feature type="modified residue" description="N6-succinyllysine" evidence="5">
    <location>
        <position position="92"/>
    </location>
</feature>
<feature type="modified residue" description="Phosphoserine" evidence="2">
    <location>
        <position position="99"/>
    </location>
</feature>
<feature type="modified residue" description="Phosphoserine" evidence="2">
    <location>
        <position position="103"/>
    </location>
</feature>
<feature type="modified residue" description="Phosphoserine" evidence="4">
    <location>
        <position position="106"/>
    </location>
</feature>
<feature type="modified residue" description="Phosphoserine" evidence="5">
    <location>
        <position position="108"/>
    </location>
</feature>
<feature type="modified residue" description="N6-acetyllysine; alternate" evidence="2">
    <location>
        <position position="123"/>
    </location>
</feature>
<feature type="modified residue" description="N6-succinyllysine; alternate" evidence="2">
    <location>
        <position position="123"/>
    </location>
</feature>
<feature type="modified residue" description="N6-acetyllysine; alternate" evidence="5">
    <location>
        <position position="137"/>
    </location>
</feature>
<feature type="modified residue" description="N6-succinyllysine; alternate" evidence="5">
    <location>
        <position position="137"/>
    </location>
</feature>
<feature type="lipid moiety-binding region" description="S-palmitoyl cysteine" evidence="1">
    <location>
        <position position="7"/>
    </location>
</feature>
<feature type="disulfide bond" evidence="1">
    <location>
        <begin position="58"/>
        <end position="147"/>
    </location>
</feature>
<keyword id="KW-0007">Acetylation</keyword>
<keyword id="KW-0049">Antioxidant</keyword>
<keyword id="KW-0186">Copper</keyword>
<keyword id="KW-0963">Cytoplasm</keyword>
<keyword id="KW-1015">Disulfide bond</keyword>
<keyword id="KW-0449">Lipoprotein</keyword>
<keyword id="KW-0479">Metal-binding</keyword>
<keyword id="KW-0539">Nucleus</keyword>
<keyword id="KW-0560">Oxidoreductase</keyword>
<keyword id="KW-0564">Palmitate</keyword>
<keyword id="KW-0597">Phosphoprotein</keyword>
<keyword id="KW-0862">Zinc</keyword>
<gene>
    <name evidence="2" type="primary">SOD1</name>
</gene>
<organism>
    <name type="scientific">Hylobates lar</name>
    <name type="common">Lar gibbon</name>
    <name type="synonym">White-handed gibbon</name>
    <dbReference type="NCBI Taxonomy" id="9580"/>
    <lineage>
        <taxon>Eukaryota</taxon>
        <taxon>Metazoa</taxon>
        <taxon>Chordata</taxon>
        <taxon>Craniata</taxon>
        <taxon>Vertebrata</taxon>
        <taxon>Euteleostomi</taxon>
        <taxon>Mammalia</taxon>
        <taxon>Eutheria</taxon>
        <taxon>Euarchontoglires</taxon>
        <taxon>Primates</taxon>
        <taxon>Haplorrhini</taxon>
        <taxon>Catarrhini</taxon>
        <taxon>Hylobatidae</taxon>
        <taxon>Hylobates</taxon>
    </lineage>
</organism>
<sequence length="154" mass="16068">MAMKAVCVLKGDSPVQGIINFEQKESNGPVKVYGRITGLTEGLHGFHVHQFGDNTQGCTSAGPHFNPLSRKHGGPKDEERHVGDLGNVTADKDGVAKVSIEDSVISLSGDHSIIGRTLVVHEKADDLGKGGNEESTKTGNAGSRLACGVIGIAQ</sequence>
<proteinExistence type="evidence at transcript level"/>
<dbReference type="EC" id="1.15.1.1" evidence="2"/>
<dbReference type="EMBL" id="AB087268">
    <property type="protein sequence ID" value="BAC20347.1"/>
    <property type="molecule type" value="mRNA"/>
</dbReference>
<dbReference type="SMR" id="Q8HXQ3"/>
<dbReference type="GO" id="GO:0005737">
    <property type="term" value="C:cytoplasm"/>
    <property type="evidence" value="ECO:0000250"/>
    <property type="project" value="UniProtKB"/>
</dbReference>
<dbReference type="GO" id="GO:0031410">
    <property type="term" value="C:cytoplasmic vesicle"/>
    <property type="evidence" value="ECO:0000250"/>
    <property type="project" value="UniProtKB"/>
</dbReference>
<dbReference type="GO" id="GO:0005829">
    <property type="term" value="C:cytosol"/>
    <property type="evidence" value="ECO:0000250"/>
    <property type="project" value="UniProtKB"/>
</dbReference>
<dbReference type="GO" id="GO:0032839">
    <property type="term" value="C:dendrite cytoplasm"/>
    <property type="evidence" value="ECO:0000250"/>
    <property type="project" value="UniProtKB"/>
</dbReference>
<dbReference type="GO" id="GO:0005739">
    <property type="term" value="C:mitochondrion"/>
    <property type="evidence" value="ECO:0000250"/>
    <property type="project" value="UniProtKB"/>
</dbReference>
<dbReference type="GO" id="GO:0043025">
    <property type="term" value="C:neuronal cell body"/>
    <property type="evidence" value="ECO:0000250"/>
    <property type="project" value="UniProtKB"/>
</dbReference>
<dbReference type="GO" id="GO:0005634">
    <property type="term" value="C:nucleus"/>
    <property type="evidence" value="ECO:0000250"/>
    <property type="project" value="UniProtKB"/>
</dbReference>
<dbReference type="GO" id="GO:0032991">
    <property type="term" value="C:protein-containing complex"/>
    <property type="evidence" value="ECO:0000250"/>
    <property type="project" value="UniProtKB"/>
</dbReference>
<dbReference type="GO" id="GO:0005507">
    <property type="term" value="F:copper ion binding"/>
    <property type="evidence" value="ECO:0000250"/>
    <property type="project" value="UniProtKB"/>
</dbReference>
<dbReference type="GO" id="GO:0030346">
    <property type="term" value="F:protein phosphatase 2B binding"/>
    <property type="evidence" value="ECO:0000250"/>
    <property type="project" value="UniProtKB"/>
</dbReference>
<dbReference type="GO" id="GO:0051087">
    <property type="term" value="F:protein-folding chaperone binding"/>
    <property type="evidence" value="ECO:0000250"/>
    <property type="project" value="UniProtKB"/>
</dbReference>
<dbReference type="GO" id="GO:0004784">
    <property type="term" value="F:superoxide dismutase activity"/>
    <property type="evidence" value="ECO:0000250"/>
    <property type="project" value="UniProtKB"/>
</dbReference>
<dbReference type="GO" id="GO:0008270">
    <property type="term" value="F:zinc ion binding"/>
    <property type="evidence" value="ECO:0000250"/>
    <property type="project" value="UniProtKB"/>
</dbReference>
<dbReference type="GO" id="GO:0060088">
    <property type="term" value="P:auditory receptor cell stereocilium organization"/>
    <property type="evidence" value="ECO:0000250"/>
    <property type="project" value="UniProtKB"/>
</dbReference>
<dbReference type="GO" id="GO:0007566">
    <property type="term" value="P:embryo implantation"/>
    <property type="evidence" value="ECO:0000250"/>
    <property type="project" value="UniProtKB"/>
</dbReference>
<dbReference type="GO" id="GO:0006749">
    <property type="term" value="P:glutathione metabolic process"/>
    <property type="evidence" value="ECO:0000250"/>
    <property type="project" value="UniProtKB"/>
</dbReference>
<dbReference type="GO" id="GO:0060047">
    <property type="term" value="P:heart contraction"/>
    <property type="evidence" value="ECO:0000250"/>
    <property type="project" value="UniProtKB"/>
</dbReference>
<dbReference type="GO" id="GO:0050665">
    <property type="term" value="P:hydrogen peroxide biosynthetic process"/>
    <property type="evidence" value="ECO:0000250"/>
    <property type="project" value="UniProtKB"/>
</dbReference>
<dbReference type="GO" id="GO:0006879">
    <property type="term" value="P:intracellular iron ion homeostasis"/>
    <property type="evidence" value="ECO:0000250"/>
    <property type="project" value="UniProtKB"/>
</dbReference>
<dbReference type="GO" id="GO:0007626">
    <property type="term" value="P:locomotory behavior"/>
    <property type="evidence" value="ECO:0000250"/>
    <property type="project" value="UniProtKB"/>
</dbReference>
<dbReference type="GO" id="GO:0046716">
    <property type="term" value="P:muscle cell cellular homeostasis"/>
    <property type="evidence" value="ECO:0000250"/>
    <property type="project" value="UniProtKB"/>
</dbReference>
<dbReference type="GO" id="GO:0002262">
    <property type="term" value="P:myeloid cell homeostasis"/>
    <property type="evidence" value="ECO:0000250"/>
    <property type="project" value="UniProtKB"/>
</dbReference>
<dbReference type="GO" id="GO:0043524">
    <property type="term" value="P:negative regulation of neuron apoptotic process"/>
    <property type="evidence" value="ECO:0000250"/>
    <property type="project" value="UniProtKB"/>
</dbReference>
<dbReference type="GO" id="GO:0060052">
    <property type="term" value="P:neurofilament cytoskeleton organization"/>
    <property type="evidence" value="ECO:0000250"/>
    <property type="project" value="UniProtKB"/>
</dbReference>
<dbReference type="GO" id="GO:0001541">
    <property type="term" value="P:ovarian follicle development"/>
    <property type="evidence" value="ECO:0000250"/>
    <property type="project" value="UniProtKB"/>
</dbReference>
<dbReference type="GO" id="GO:0032287">
    <property type="term" value="P:peripheral nervous system myelin maintenance"/>
    <property type="evidence" value="ECO:0000250"/>
    <property type="project" value="UniProtKB"/>
</dbReference>
<dbReference type="GO" id="GO:0001819">
    <property type="term" value="P:positive regulation of cytokine production"/>
    <property type="evidence" value="ECO:0000250"/>
    <property type="project" value="UniProtKB"/>
</dbReference>
<dbReference type="GO" id="GO:0043410">
    <property type="term" value="P:positive regulation of MAPK cascade"/>
    <property type="evidence" value="ECO:0000250"/>
    <property type="project" value="UniProtKB"/>
</dbReference>
<dbReference type="GO" id="GO:0072593">
    <property type="term" value="P:reactive oxygen species metabolic process"/>
    <property type="evidence" value="ECO:0000250"/>
    <property type="project" value="UniProtKB"/>
</dbReference>
<dbReference type="GO" id="GO:0008217">
    <property type="term" value="P:regulation of blood pressure"/>
    <property type="evidence" value="ECO:0000250"/>
    <property type="project" value="UniProtKB"/>
</dbReference>
<dbReference type="GO" id="GO:0051881">
    <property type="term" value="P:regulation of mitochondrial membrane potential"/>
    <property type="evidence" value="ECO:0000250"/>
    <property type="project" value="UniProtKB"/>
</dbReference>
<dbReference type="GO" id="GO:0040014">
    <property type="term" value="P:regulation of multicellular organism growth"/>
    <property type="evidence" value="ECO:0000250"/>
    <property type="project" value="UniProtKB"/>
</dbReference>
<dbReference type="GO" id="GO:0060087">
    <property type="term" value="P:relaxation of vascular associated smooth muscle"/>
    <property type="evidence" value="ECO:0000250"/>
    <property type="project" value="UniProtKB"/>
</dbReference>
<dbReference type="GO" id="GO:0019430">
    <property type="term" value="P:removal of superoxide radicals"/>
    <property type="evidence" value="ECO:0000250"/>
    <property type="project" value="UniProtKB"/>
</dbReference>
<dbReference type="GO" id="GO:0048678">
    <property type="term" value="P:response to axon injury"/>
    <property type="evidence" value="ECO:0000250"/>
    <property type="project" value="UniProtKB"/>
</dbReference>
<dbReference type="GO" id="GO:0045471">
    <property type="term" value="P:response to ethanol"/>
    <property type="evidence" value="ECO:0000250"/>
    <property type="project" value="UniProtKB"/>
</dbReference>
<dbReference type="GO" id="GO:0009408">
    <property type="term" value="P:response to heat"/>
    <property type="evidence" value="ECO:0000250"/>
    <property type="project" value="UniProtKB"/>
</dbReference>
<dbReference type="GO" id="GO:0042542">
    <property type="term" value="P:response to hydrogen peroxide"/>
    <property type="evidence" value="ECO:0000250"/>
    <property type="project" value="UniProtKB"/>
</dbReference>
<dbReference type="GO" id="GO:0000303">
    <property type="term" value="P:response to superoxide"/>
    <property type="evidence" value="ECO:0000250"/>
    <property type="project" value="UniProtKB"/>
</dbReference>
<dbReference type="GO" id="GO:0001895">
    <property type="term" value="P:retina homeostasis"/>
    <property type="evidence" value="ECO:0000250"/>
    <property type="project" value="UniProtKB"/>
</dbReference>
<dbReference type="GO" id="GO:0007605">
    <property type="term" value="P:sensory perception of sound"/>
    <property type="evidence" value="ECO:0000250"/>
    <property type="project" value="UniProtKB"/>
</dbReference>
<dbReference type="GO" id="GO:0007283">
    <property type="term" value="P:spermatogenesis"/>
    <property type="evidence" value="ECO:0000250"/>
    <property type="project" value="UniProtKB"/>
</dbReference>
<dbReference type="GO" id="GO:0006801">
    <property type="term" value="P:superoxide metabolic process"/>
    <property type="evidence" value="ECO:0000250"/>
    <property type="project" value="UniProtKB"/>
</dbReference>
<dbReference type="GO" id="GO:0019226">
    <property type="term" value="P:transmission of nerve impulse"/>
    <property type="evidence" value="ECO:0000250"/>
    <property type="project" value="UniProtKB"/>
</dbReference>
<dbReference type="CDD" id="cd00305">
    <property type="entry name" value="Cu-Zn_Superoxide_Dismutase"/>
    <property type="match status" value="1"/>
</dbReference>
<dbReference type="FunFam" id="2.60.40.200:FF:000001">
    <property type="entry name" value="Superoxide dismutase [Cu-Zn]"/>
    <property type="match status" value="1"/>
</dbReference>
<dbReference type="Gene3D" id="2.60.40.200">
    <property type="entry name" value="Superoxide dismutase, copper/zinc binding domain"/>
    <property type="match status" value="1"/>
</dbReference>
<dbReference type="InterPro" id="IPR036423">
    <property type="entry name" value="SOD-like_Cu/Zn_dom_sf"/>
</dbReference>
<dbReference type="InterPro" id="IPR024134">
    <property type="entry name" value="SOD_Cu/Zn_/chaperone"/>
</dbReference>
<dbReference type="InterPro" id="IPR018152">
    <property type="entry name" value="SOD_Cu/Zn_BS"/>
</dbReference>
<dbReference type="InterPro" id="IPR001424">
    <property type="entry name" value="SOD_Cu_Zn_dom"/>
</dbReference>
<dbReference type="PANTHER" id="PTHR10003">
    <property type="entry name" value="SUPEROXIDE DISMUTASE CU-ZN -RELATED"/>
    <property type="match status" value="1"/>
</dbReference>
<dbReference type="Pfam" id="PF00080">
    <property type="entry name" value="Sod_Cu"/>
    <property type="match status" value="1"/>
</dbReference>
<dbReference type="PRINTS" id="PR00068">
    <property type="entry name" value="CUZNDISMTASE"/>
</dbReference>
<dbReference type="SUPFAM" id="SSF49329">
    <property type="entry name" value="Cu,Zn superoxide dismutase-like"/>
    <property type="match status" value="1"/>
</dbReference>
<dbReference type="PROSITE" id="PS00087">
    <property type="entry name" value="SOD_CU_ZN_1"/>
    <property type="match status" value="1"/>
</dbReference>
<dbReference type="PROSITE" id="PS00332">
    <property type="entry name" value="SOD_CU_ZN_2"/>
    <property type="match status" value="1"/>
</dbReference>